<name>RL16_AMOA5</name>
<comment type="function">
    <text evidence="1">Binds 23S rRNA and is also seen to make contacts with the A and possibly P site tRNAs.</text>
</comment>
<comment type="subunit">
    <text evidence="1">Part of the 50S ribosomal subunit.</text>
</comment>
<comment type="similarity">
    <text evidence="1">Belongs to the universal ribosomal protein uL16 family.</text>
</comment>
<proteinExistence type="inferred from homology"/>
<protein>
    <recommendedName>
        <fullName evidence="1">Large ribosomal subunit protein uL16</fullName>
    </recommendedName>
    <alternativeName>
        <fullName evidence="2">50S ribosomal protein L16</fullName>
    </alternativeName>
</protein>
<reference key="1">
    <citation type="journal article" date="2010" name="J. Bacteriol.">
        <title>The genome of the amoeba symbiont 'Candidatus Amoebophilus asiaticus' reveals common mechanisms for host cell interaction among amoeba-associated bacteria.</title>
        <authorList>
            <person name="Schmitz-Esser S."/>
            <person name="Tischler P."/>
            <person name="Arnold R."/>
            <person name="Montanaro J."/>
            <person name="Wagner M."/>
            <person name="Rattei T."/>
            <person name="Horn M."/>
        </authorList>
    </citation>
    <scope>NUCLEOTIDE SEQUENCE [LARGE SCALE GENOMIC DNA]</scope>
    <source>
        <strain>5a2</strain>
    </source>
</reference>
<evidence type="ECO:0000255" key="1">
    <source>
        <dbReference type="HAMAP-Rule" id="MF_01342"/>
    </source>
</evidence>
<evidence type="ECO:0000305" key="2"/>
<feature type="chain" id="PRO_1000142918" description="Large ribosomal subunit protein uL16">
    <location>
        <begin position="1"/>
        <end position="140"/>
    </location>
</feature>
<dbReference type="EMBL" id="CP001102">
    <property type="protein sequence ID" value="ACE05635.1"/>
    <property type="molecule type" value="Genomic_DNA"/>
</dbReference>
<dbReference type="RefSeq" id="WP_012472400.1">
    <property type="nucleotide sequence ID" value="NC_010830.1"/>
</dbReference>
<dbReference type="SMR" id="B3EUL6"/>
<dbReference type="STRING" id="452471.Aasi_0190"/>
<dbReference type="KEGG" id="aas:Aasi_0190"/>
<dbReference type="eggNOG" id="COG0197">
    <property type="taxonomic scope" value="Bacteria"/>
</dbReference>
<dbReference type="HOGENOM" id="CLU_078858_2_1_10"/>
<dbReference type="OrthoDB" id="9802589at2"/>
<dbReference type="Proteomes" id="UP000001227">
    <property type="component" value="Chromosome"/>
</dbReference>
<dbReference type="GO" id="GO:0022625">
    <property type="term" value="C:cytosolic large ribosomal subunit"/>
    <property type="evidence" value="ECO:0007669"/>
    <property type="project" value="TreeGrafter"/>
</dbReference>
<dbReference type="GO" id="GO:0019843">
    <property type="term" value="F:rRNA binding"/>
    <property type="evidence" value="ECO:0007669"/>
    <property type="project" value="UniProtKB-UniRule"/>
</dbReference>
<dbReference type="GO" id="GO:0003735">
    <property type="term" value="F:structural constituent of ribosome"/>
    <property type="evidence" value="ECO:0007669"/>
    <property type="project" value="InterPro"/>
</dbReference>
<dbReference type="GO" id="GO:0000049">
    <property type="term" value="F:tRNA binding"/>
    <property type="evidence" value="ECO:0007669"/>
    <property type="project" value="UniProtKB-KW"/>
</dbReference>
<dbReference type="GO" id="GO:0006412">
    <property type="term" value="P:translation"/>
    <property type="evidence" value="ECO:0007669"/>
    <property type="project" value="UniProtKB-UniRule"/>
</dbReference>
<dbReference type="CDD" id="cd01433">
    <property type="entry name" value="Ribosomal_L16_L10e"/>
    <property type="match status" value="1"/>
</dbReference>
<dbReference type="FunFam" id="3.90.1170.10:FF:000001">
    <property type="entry name" value="50S ribosomal protein L16"/>
    <property type="match status" value="1"/>
</dbReference>
<dbReference type="Gene3D" id="3.90.1170.10">
    <property type="entry name" value="Ribosomal protein L10e/L16"/>
    <property type="match status" value="1"/>
</dbReference>
<dbReference type="HAMAP" id="MF_01342">
    <property type="entry name" value="Ribosomal_uL16"/>
    <property type="match status" value="1"/>
</dbReference>
<dbReference type="InterPro" id="IPR047873">
    <property type="entry name" value="Ribosomal_uL16"/>
</dbReference>
<dbReference type="InterPro" id="IPR000114">
    <property type="entry name" value="Ribosomal_uL16_bact-type"/>
</dbReference>
<dbReference type="InterPro" id="IPR020798">
    <property type="entry name" value="Ribosomal_uL16_CS"/>
</dbReference>
<dbReference type="InterPro" id="IPR016180">
    <property type="entry name" value="Ribosomal_uL16_dom"/>
</dbReference>
<dbReference type="InterPro" id="IPR036920">
    <property type="entry name" value="Ribosomal_uL16_sf"/>
</dbReference>
<dbReference type="NCBIfam" id="TIGR01164">
    <property type="entry name" value="rplP_bact"/>
    <property type="match status" value="1"/>
</dbReference>
<dbReference type="PANTHER" id="PTHR12220">
    <property type="entry name" value="50S/60S RIBOSOMAL PROTEIN L16"/>
    <property type="match status" value="1"/>
</dbReference>
<dbReference type="PANTHER" id="PTHR12220:SF13">
    <property type="entry name" value="LARGE RIBOSOMAL SUBUNIT PROTEIN UL16M"/>
    <property type="match status" value="1"/>
</dbReference>
<dbReference type="Pfam" id="PF00252">
    <property type="entry name" value="Ribosomal_L16"/>
    <property type="match status" value="1"/>
</dbReference>
<dbReference type="PRINTS" id="PR00060">
    <property type="entry name" value="RIBOSOMALL16"/>
</dbReference>
<dbReference type="SUPFAM" id="SSF54686">
    <property type="entry name" value="Ribosomal protein L16p/L10e"/>
    <property type="match status" value="1"/>
</dbReference>
<dbReference type="PROSITE" id="PS00586">
    <property type="entry name" value="RIBOSOMAL_L16_1"/>
    <property type="match status" value="1"/>
</dbReference>
<dbReference type="PROSITE" id="PS00701">
    <property type="entry name" value="RIBOSOMAL_L16_2"/>
    <property type="match status" value="1"/>
</dbReference>
<organism>
    <name type="scientific">Amoebophilus asiaticus (strain 5a2)</name>
    <dbReference type="NCBI Taxonomy" id="452471"/>
    <lineage>
        <taxon>Bacteria</taxon>
        <taxon>Pseudomonadati</taxon>
        <taxon>Bacteroidota</taxon>
        <taxon>Cytophagia</taxon>
        <taxon>Cytophagales</taxon>
        <taxon>Amoebophilaceae</taxon>
        <taxon>Candidatus Amoebophilus</taxon>
    </lineage>
</organism>
<keyword id="KW-1185">Reference proteome</keyword>
<keyword id="KW-0687">Ribonucleoprotein</keyword>
<keyword id="KW-0689">Ribosomal protein</keyword>
<keyword id="KW-0694">RNA-binding</keyword>
<keyword id="KW-0699">rRNA-binding</keyword>
<keyword id="KW-0820">tRNA-binding</keyword>
<sequence length="140" mass="15789">MLQPKRTKYRKVQKGRVKGLAHRGSSLAFGTFGIKALEAIWLTARQIEAARIAMTRAMKRQGQVWIRVFPDKPITKKPAEVRMGKGKGSPEYWAAVVKPGKILFEIEGVDINLAREATRLAIHKLPIKAKFVVHKDYINA</sequence>
<accession>B3EUL6</accession>
<gene>
    <name evidence="1" type="primary">rplP</name>
    <name type="ordered locus">Aasi_0190</name>
</gene>